<feature type="chain" id="PRO_0000204817" description="Viomycin phosphotransferase">
    <location>
        <begin position="1"/>
        <end position="287"/>
    </location>
</feature>
<feature type="active site" description="Proton acceptor" evidence="1">
    <location>
        <position position="190"/>
    </location>
</feature>
<reference key="1">
    <citation type="journal article" date="1985" name="Mol. Gen. Genet.">
        <title>Nucleotide sequences encoding and promoting expression of three antibiotic resistance genes indigenous to Streptomyces.</title>
        <authorList>
            <person name="Bibb M.J."/>
            <person name="Bibb M.J."/>
            <person name="Ward J.M."/>
            <person name="Cohen S.N."/>
        </authorList>
    </citation>
    <scope>NUCLEOTIDE SEQUENCE [GENOMIC DNA]</scope>
</reference>
<organism>
    <name type="scientific">Streptomyces vinaceus</name>
    <dbReference type="NCBI Taxonomy" id="1960"/>
    <lineage>
        <taxon>Bacteria</taxon>
        <taxon>Bacillati</taxon>
        <taxon>Actinomycetota</taxon>
        <taxon>Actinomycetes</taxon>
        <taxon>Kitasatosporales</taxon>
        <taxon>Streptomycetaceae</taxon>
        <taxon>Streptomyces</taxon>
    </lineage>
</organism>
<protein>
    <recommendedName>
        <fullName>Viomycin phosphotransferase</fullName>
        <ecNumber>2.7.1.103</ecNumber>
    </recommendedName>
    <alternativeName>
        <fullName>Viomycin kinase</fullName>
    </alternativeName>
</protein>
<evidence type="ECO:0000250" key="1"/>
<evidence type="ECO:0000305" key="2"/>
<name>VPH_STRVI</name>
<dbReference type="EC" id="2.7.1.103"/>
<dbReference type="EMBL" id="X02393">
    <property type="protein sequence ID" value="CAA26235.1"/>
    <property type="molecule type" value="Genomic_DNA"/>
</dbReference>
<dbReference type="PIR" id="S28371">
    <property type="entry name" value="S28371"/>
</dbReference>
<dbReference type="RefSeq" id="WP_030275963.1">
    <property type="nucleotide sequence ID" value="NG_048565.1"/>
</dbReference>
<dbReference type="SMR" id="P18623"/>
<dbReference type="CARD" id="ARO:3003061">
    <property type="molecule name" value="vph"/>
    <property type="mechanism identifier" value="ARO:0001004"/>
    <property type="mechanism name" value="antibiotic inactivation"/>
</dbReference>
<dbReference type="GO" id="GO:0005524">
    <property type="term" value="F:ATP binding"/>
    <property type="evidence" value="ECO:0007669"/>
    <property type="project" value="UniProtKB-KW"/>
</dbReference>
<dbReference type="GO" id="GO:0050394">
    <property type="term" value="F:viomycin kinase activity"/>
    <property type="evidence" value="ECO:0007669"/>
    <property type="project" value="UniProtKB-EC"/>
</dbReference>
<dbReference type="GO" id="GO:0046677">
    <property type="term" value="P:response to antibiotic"/>
    <property type="evidence" value="ECO:0007669"/>
    <property type="project" value="UniProtKB-KW"/>
</dbReference>
<dbReference type="Gene3D" id="3.90.1200.10">
    <property type="match status" value="1"/>
</dbReference>
<dbReference type="InterPro" id="IPR051678">
    <property type="entry name" value="AGP_Transferase"/>
</dbReference>
<dbReference type="InterPro" id="IPR002575">
    <property type="entry name" value="Aminoglycoside_PTrfase"/>
</dbReference>
<dbReference type="InterPro" id="IPR011009">
    <property type="entry name" value="Kinase-like_dom_sf"/>
</dbReference>
<dbReference type="NCBIfam" id="NF000088">
    <property type="entry name" value="viomycin_Vph"/>
    <property type="match status" value="1"/>
</dbReference>
<dbReference type="PANTHER" id="PTHR21310:SF15">
    <property type="entry name" value="AMINOGLYCOSIDE PHOSPHOTRANSFERASE DOMAIN-CONTAINING PROTEIN"/>
    <property type="match status" value="1"/>
</dbReference>
<dbReference type="PANTHER" id="PTHR21310">
    <property type="entry name" value="AMINOGLYCOSIDE PHOSPHOTRANSFERASE-RELATED-RELATED"/>
    <property type="match status" value="1"/>
</dbReference>
<dbReference type="Pfam" id="PF01636">
    <property type="entry name" value="APH"/>
    <property type="match status" value="1"/>
</dbReference>
<dbReference type="SUPFAM" id="SSF56112">
    <property type="entry name" value="Protein kinase-like (PK-like)"/>
    <property type="match status" value="1"/>
</dbReference>
<proteinExistence type="inferred from homology"/>
<sequence length="287" mass="30468">MRIIETHRDLLSRLLPGDTVGGLAVHEGQFHHVVIGSHRVVCFARTRAAADRLPGRADVLRALAGIDLGFRTPQPLSEGGAQGTDEPPYLVLSRIPGAPLEDDVLTSPEVAEAVARQYATLLSGLAAAGDEEKVRAALPEAPANEWQEFATGVRTELFPLMSDGGRERAERELAALDALPHLTSAVVHGDLGGENVLWETVDGVPRMSGVVDWDEVGIGDPAEDLAAIGASYGEELLGRVLALGGWADNGTAERISAIRGTFALQQALYAQRDGDEEELADGLSGYR</sequence>
<keyword id="KW-0046">Antibiotic resistance</keyword>
<keyword id="KW-0067">ATP-binding</keyword>
<keyword id="KW-0418">Kinase</keyword>
<keyword id="KW-0547">Nucleotide-binding</keyword>
<keyword id="KW-0808">Transferase</keyword>
<comment type="function">
    <text>The aminoglycoside phosphotransferases achieve inactivation of their antibiotic substrates by phosphorylation.</text>
</comment>
<comment type="catalytic activity">
    <reaction>
        <text>viomycin + ATP = O-phosphoviomycin + ADP + H(+)</text>
        <dbReference type="Rhea" id="RHEA:20509"/>
        <dbReference type="ChEBI" id="CHEBI:15378"/>
        <dbReference type="ChEBI" id="CHEBI:30616"/>
        <dbReference type="ChEBI" id="CHEBI:60080"/>
        <dbReference type="ChEBI" id="CHEBI:60081"/>
        <dbReference type="ChEBI" id="CHEBI:456216"/>
        <dbReference type="EC" id="2.7.1.103"/>
    </reaction>
</comment>
<comment type="similarity">
    <text evidence="2">Belongs to the aminoglycoside phosphotransferase family.</text>
</comment>
<accession>P18623</accession>
<gene>
    <name type="primary">vph</name>
</gene>